<protein>
    <recommendedName>
        <fullName>Golgi SNAP receptor complex member 1</fullName>
    </recommendedName>
    <alternativeName>
        <fullName>28 kDa Golgi SNARE protein</fullName>
    </alternativeName>
    <alternativeName>
        <fullName>28 kDa cis-Golgi SNARE p28</fullName>
    </alternativeName>
</protein>
<keyword id="KW-0007">Acetylation</keyword>
<keyword id="KW-0175">Coiled coil</keyword>
<keyword id="KW-0931">ER-Golgi transport</keyword>
<keyword id="KW-0333">Golgi apparatus</keyword>
<keyword id="KW-0472">Membrane</keyword>
<keyword id="KW-0597">Phosphoprotein</keyword>
<keyword id="KW-0653">Protein transport</keyword>
<keyword id="KW-1185">Reference proteome</keyword>
<keyword id="KW-0812">Transmembrane</keyword>
<keyword id="KW-1133">Transmembrane helix</keyword>
<keyword id="KW-0813">Transport</keyword>
<organism>
    <name type="scientific">Bos taurus</name>
    <name type="common">Bovine</name>
    <dbReference type="NCBI Taxonomy" id="9913"/>
    <lineage>
        <taxon>Eukaryota</taxon>
        <taxon>Metazoa</taxon>
        <taxon>Chordata</taxon>
        <taxon>Craniata</taxon>
        <taxon>Vertebrata</taxon>
        <taxon>Euteleostomi</taxon>
        <taxon>Mammalia</taxon>
        <taxon>Eutheria</taxon>
        <taxon>Laurasiatheria</taxon>
        <taxon>Artiodactyla</taxon>
        <taxon>Ruminantia</taxon>
        <taxon>Pecora</taxon>
        <taxon>Bovidae</taxon>
        <taxon>Bovinae</taxon>
        <taxon>Bos</taxon>
    </lineage>
</organism>
<reference key="1">
    <citation type="submission" date="2005-11" db="EMBL/GenBank/DDBJ databases">
        <authorList>
            <consortium name="NIH - Mammalian Gene Collection (MGC) project"/>
        </authorList>
    </citation>
    <scope>NUCLEOTIDE SEQUENCE [LARGE SCALE MRNA]</scope>
    <source>
        <strain>Crossbred X Angus</strain>
        <tissue>Liver</tissue>
    </source>
</reference>
<reference key="2">
    <citation type="journal article" date="2007" name="Am. J. Physiol.">
        <title>Dysfunction of Golgi tethers, SNAREs, and SNAPs in monocrotaline-induced pulmonary hypertension.</title>
        <authorList>
            <person name="Sehgal P.B."/>
            <person name="Mukhopadhyay S."/>
            <person name="Xu F."/>
            <person name="Patel K."/>
            <person name="Shah M."/>
        </authorList>
    </citation>
    <scope>SUBCELLULAR LOCATION</scope>
    <scope>INDUCTION BY MONOCROTALINE</scope>
</reference>
<evidence type="ECO:0000250" key="1"/>
<evidence type="ECO:0000250" key="2">
    <source>
        <dbReference type="UniProtKB" id="O95249"/>
    </source>
</evidence>
<evidence type="ECO:0000255" key="3"/>
<evidence type="ECO:0000256" key="4">
    <source>
        <dbReference type="SAM" id="MobiDB-lite"/>
    </source>
</evidence>
<evidence type="ECO:0000269" key="5">
    <source>
    </source>
</evidence>
<evidence type="ECO:0000305" key="6"/>
<name>GOSR1_BOVIN</name>
<gene>
    <name type="primary">GOSR1</name>
</gene>
<accession>Q2TBU3</accession>
<feature type="initiator methionine" description="Removed" evidence="2">
    <location>
        <position position="1"/>
    </location>
</feature>
<feature type="chain" id="PRO_0000239656" description="Golgi SNAP receptor complex member 1">
    <location>
        <begin position="2"/>
        <end position="250"/>
    </location>
</feature>
<feature type="topological domain" description="Cytoplasmic" evidence="3">
    <location>
        <begin position="2"/>
        <end position="229"/>
    </location>
</feature>
<feature type="transmembrane region" description="Helical; Anchor for type IV membrane protein" evidence="3">
    <location>
        <begin position="230"/>
        <end position="250"/>
    </location>
</feature>
<feature type="region of interest" description="Disordered" evidence="4">
    <location>
        <begin position="39"/>
        <end position="59"/>
    </location>
</feature>
<feature type="coiled-coil region" evidence="3">
    <location>
        <begin position="10"/>
        <end position="30"/>
    </location>
</feature>
<feature type="coiled-coil region" evidence="3">
    <location>
        <begin position="70"/>
        <end position="93"/>
    </location>
</feature>
<feature type="compositionally biased region" description="Basic and acidic residues" evidence="4">
    <location>
        <begin position="41"/>
        <end position="51"/>
    </location>
</feature>
<feature type="modified residue" description="N-acetylalanine" evidence="2">
    <location>
        <position position="2"/>
    </location>
</feature>
<feature type="modified residue" description="Phosphoserine" evidence="2">
    <location>
        <position position="141"/>
    </location>
</feature>
<proteinExistence type="evidence at transcript level"/>
<dbReference type="EMBL" id="BC109657">
    <property type="protein sequence ID" value="AAI09658.1"/>
    <property type="molecule type" value="mRNA"/>
</dbReference>
<dbReference type="RefSeq" id="NP_001033614.1">
    <property type="nucleotide sequence ID" value="NM_001038525.1"/>
</dbReference>
<dbReference type="SMR" id="Q2TBU3"/>
<dbReference type="FunCoup" id="Q2TBU3">
    <property type="interactions" value="4686"/>
</dbReference>
<dbReference type="STRING" id="9913.ENSBTAP00000006525"/>
<dbReference type="SwissPalm" id="Q2TBU3"/>
<dbReference type="PaxDb" id="9913-ENSBTAP00000006525"/>
<dbReference type="GeneID" id="511030"/>
<dbReference type="KEGG" id="bta:511030"/>
<dbReference type="CTD" id="9527"/>
<dbReference type="VEuPathDB" id="HostDB:ENSBTAG00000004961"/>
<dbReference type="eggNOG" id="KOG3208">
    <property type="taxonomic scope" value="Eukaryota"/>
</dbReference>
<dbReference type="InParanoid" id="Q2TBU3"/>
<dbReference type="OMA" id="QAYAVND"/>
<dbReference type="OrthoDB" id="422156at2759"/>
<dbReference type="Reactome" id="R-BTA-6807878">
    <property type="pathway name" value="COPI-mediated anterograde transport"/>
</dbReference>
<dbReference type="Reactome" id="R-BTA-6811438">
    <property type="pathway name" value="Intra-Golgi traffic"/>
</dbReference>
<dbReference type="CD-CODE" id="D7FE2080">
    <property type="entry name" value="Nucleolus"/>
</dbReference>
<dbReference type="Proteomes" id="UP000009136">
    <property type="component" value="Chromosome 19"/>
</dbReference>
<dbReference type="Bgee" id="ENSBTAG00000004961">
    <property type="expression patterns" value="Expressed in oocyte and 107 other cell types or tissues"/>
</dbReference>
<dbReference type="GO" id="GO:0005801">
    <property type="term" value="C:cis-Golgi network"/>
    <property type="evidence" value="ECO:0007669"/>
    <property type="project" value="InterPro"/>
</dbReference>
<dbReference type="GO" id="GO:0005797">
    <property type="term" value="C:Golgi medial cisterna"/>
    <property type="evidence" value="ECO:0000318"/>
    <property type="project" value="GO_Central"/>
</dbReference>
<dbReference type="GO" id="GO:0000139">
    <property type="term" value="C:Golgi membrane"/>
    <property type="evidence" value="ECO:0000318"/>
    <property type="project" value="GO_Central"/>
</dbReference>
<dbReference type="GO" id="GO:0031201">
    <property type="term" value="C:SNARE complex"/>
    <property type="evidence" value="ECO:0000318"/>
    <property type="project" value="GO_Central"/>
</dbReference>
<dbReference type="GO" id="GO:0005484">
    <property type="term" value="F:SNAP receptor activity"/>
    <property type="evidence" value="ECO:0000318"/>
    <property type="project" value="GO_Central"/>
</dbReference>
<dbReference type="GO" id="GO:0006888">
    <property type="term" value="P:endoplasmic reticulum to Golgi vesicle-mediated transport"/>
    <property type="evidence" value="ECO:0000318"/>
    <property type="project" value="GO_Central"/>
</dbReference>
<dbReference type="GO" id="GO:0048219">
    <property type="term" value="P:inter-Golgi cisterna vesicle-mediated transport"/>
    <property type="evidence" value="ECO:0000318"/>
    <property type="project" value="GO_Central"/>
</dbReference>
<dbReference type="GO" id="GO:0015031">
    <property type="term" value="P:protein transport"/>
    <property type="evidence" value="ECO:0007669"/>
    <property type="project" value="UniProtKB-KW"/>
</dbReference>
<dbReference type="GO" id="GO:0006906">
    <property type="term" value="P:vesicle fusion"/>
    <property type="evidence" value="ECO:0000318"/>
    <property type="project" value="GO_Central"/>
</dbReference>
<dbReference type="CDD" id="cd15864">
    <property type="entry name" value="SNARE_GS28"/>
    <property type="match status" value="1"/>
</dbReference>
<dbReference type="InterPro" id="IPR023601">
    <property type="entry name" value="Golgi_SNAP_su1"/>
</dbReference>
<dbReference type="PANTHER" id="PTHR21094:SF2">
    <property type="entry name" value="GOLGI SNAP RECEPTOR COMPLEX MEMBER 1"/>
    <property type="match status" value="1"/>
</dbReference>
<dbReference type="PANTHER" id="PTHR21094">
    <property type="entry name" value="GOS-28 SNARE- RELATED"/>
    <property type="match status" value="1"/>
</dbReference>
<dbReference type="Pfam" id="PF12352">
    <property type="entry name" value="V-SNARE_C"/>
    <property type="match status" value="1"/>
</dbReference>
<dbReference type="PIRSF" id="PIRSF027109">
    <property type="entry name" value="Golgi_SNARE"/>
    <property type="match status" value="1"/>
</dbReference>
<sequence>MAAGTSNYWEDLRKQARQLENELDLKLVSFSKLCTSYSHSSARDGRRDRYSSDTTPLLNGSSQDRMFETMAIEIEQLLARLTGINDKMAEYTSSAGVPSLNAALMHTLQRHRDILQDYTHEFHKTKANFVAIRERENLMGSVRKDIESYKSGSGVNNRRTELFLKEHDHLRNSDRLIEETISIAMATKENMTSQRGMLKSIQSKMNTLANRFPAVNSLIQRINLRKRRDSLILGGVIGVCTILLLLYAFH</sequence>
<comment type="function">
    <text evidence="1">Involved in transport from the ER to the Golgi apparatus as well as in intra-Golgi transport. It belongs to a super-family of proteins called t-SNAREs or soluble NSF (N-ethylmaleimide-sensitive factor) attachment protein receptor. May play a protective role against hydrogen peroxide induced cytotoxicity under glutathione depleted conditions in neuronal cells by regulating the intracellular ROS levels via inhibition of p38 MAPK (MAPK11, MAPK12, MAPK13 and MAPK14). Participates in docking and fusion stage of ER to cis-Golgi transport. Plays an important physiological role in VLDL-transport vesicle-Golgi fusion and thus in VLDL delivery to the hepatic cis-Golgi (By similarity).</text>
</comment>
<comment type="subunit">
    <text evidence="1">Component of several multiprotein Golgi SNARE complexes. Identified in a SNARE complex with BET1, STX5 and YKT6, in a SNARE complex with BET1L, STX5 and YKT6, in a SNARE complex with STX5, GOSR2, SEC22B and BET1, and in complex with STX5 and COG3. Interacts with GABARAPL2 (By similarity).</text>
</comment>
<comment type="subcellular location">
    <subcellularLocation>
        <location evidence="5">Golgi apparatus membrane</location>
        <topology evidence="5">Single-pass type IV membrane protein</topology>
    </subcellularLocation>
    <text evidence="1">Localizes throughout the Golgi apparatus, with lowest levels in the trans-Golgi network (By similarity). Enriched on vesicular components at the terminal rims of the Golgi.</text>
</comment>
<comment type="induction">
    <text evidence="5">By monocrotaline.</text>
</comment>
<comment type="similarity">
    <text evidence="6">Belongs to the GOSR1 family.</text>
</comment>